<evidence type="ECO:0000250" key="1">
    <source>
        <dbReference type="UniProtKB" id="O15079"/>
    </source>
</evidence>
<evidence type="ECO:0000250" key="2">
    <source>
        <dbReference type="UniProtKB" id="Q80U23"/>
    </source>
</evidence>
<evidence type="ECO:0000255" key="3"/>
<evidence type="ECO:0000256" key="4">
    <source>
        <dbReference type="SAM" id="MobiDB-lite"/>
    </source>
</evidence>
<evidence type="ECO:0000269" key="5">
    <source>
    </source>
</evidence>
<evidence type="ECO:0000305" key="6"/>
<evidence type="ECO:0000312" key="7">
    <source>
        <dbReference type="RGD" id="1305867"/>
    </source>
</evidence>
<evidence type="ECO:0007744" key="8">
    <source>
    </source>
</evidence>
<accession>B5DF41</accession>
<proteinExistence type="evidence at protein level"/>
<sequence>MAMSLQGSRRASAGSRRRTSPPVSVRDAYGTASLSSSSNSGSCKGSDSSPTPRRSMKYTLCSDNHGIKPPTPEQYLTPLQQKEVCIRHLKARLKDTQDRLQDRDTEIDDLKTQLSRMQEDWIEEECHRVEAQLALKEARKEIRQLKQVIDTVKNNLIDKDKGLQKYFVDINIQNKKLETLLHSMEVAQNGVAKEEGTGESAGGSPARSLTRSSTYTKLSDPAVCGDRQAGDPSNTPAEDRADSGFVAADDTLSRTEALEASSLLSSGVDCGFEEASLHSSFNLGPRFPASNTYEKLLCGMEAAVQASCMQERAIQTDFVQYQPDLNTILEKVGQAQGCSSVLKDRHSELDLHPSGPRDPDSAVVVTVGDEPEAPEPITRGPAIHRPAVNSNPGLPVSVVCPVEEEEEAAAAAAAAAAATTTTTTTEKEPKSYWSRHYIVDLLAVVVPAVPTVAWLCRSQRRQGQPIYNISSLLRGCCTVALHSIRRISCSLSQPSAGSSGGSQL</sequence>
<feature type="chain" id="PRO_0000376936" description="Syntaphilin">
    <location>
        <begin position="1"/>
        <end position="504"/>
    </location>
</feature>
<feature type="transmembrane region" description="Helical" evidence="3">
    <location>
        <begin position="437"/>
        <end position="456"/>
    </location>
</feature>
<feature type="region of interest" description="Disordered" evidence="4">
    <location>
        <begin position="1"/>
        <end position="74"/>
    </location>
</feature>
<feature type="region of interest" description="Disordered" evidence="4">
    <location>
        <begin position="191"/>
        <end position="244"/>
    </location>
</feature>
<feature type="coiled-coil region" evidence="3">
    <location>
        <begin position="79"/>
        <end position="161"/>
    </location>
</feature>
<feature type="compositionally biased region" description="Low complexity" evidence="4">
    <location>
        <begin position="7"/>
        <end position="26"/>
    </location>
</feature>
<feature type="compositionally biased region" description="Low complexity" evidence="4">
    <location>
        <begin position="33"/>
        <end position="49"/>
    </location>
</feature>
<feature type="compositionally biased region" description="Polar residues" evidence="4">
    <location>
        <begin position="207"/>
        <end position="217"/>
    </location>
</feature>
<feature type="modified residue" description="Phosphoserine" evidence="8">
    <location>
        <position position="200"/>
    </location>
</feature>
<feature type="modified residue" description="Phosphoserine" evidence="8">
    <location>
        <position position="204"/>
    </location>
</feature>
<feature type="modified residue" description="Phosphothreonine" evidence="2">
    <location>
        <position position="214"/>
    </location>
</feature>
<feature type="modified residue" description="Phosphoserine" evidence="2">
    <location>
        <position position="219"/>
    </location>
</feature>
<feature type="modified residue" description="Phosphothreonine" evidence="8">
    <location>
        <position position="235"/>
    </location>
</feature>
<reference key="1">
    <citation type="submission" date="2005-09" db="EMBL/GenBank/DDBJ databases">
        <authorList>
            <person name="Mural R.J."/>
            <person name="Adams M.D."/>
            <person name="Myers E.W."/>
            <person name="Smith H.O."/>
            <person name="Venter J.C."/>
        </authorList>
    </citation>
    <scope>NUCLEOTIDE SEQUENCE [LARGE SCALE GENOMIC DNA]</scope>
    <source>
        <strain>Brown Norway</strain>
    </source>
</reference>
<reference key="2">
    <citation type="journal article" date="2004" name="Genome Res.">
        <title>The status, quality, and expansion of the NIH full-length cDNA project: the Mammalian Gene Collection (MGC).</title>
        <authorList>
            <consortium name="The MGC Project Team"/>
        </authorList>
    </citation>
    <scope>NUCLEOTIDE SEQUENCE [LARGE SCALE MRNA]</scope>
    <source>
        <tissue>Testis</tissue>
    </source>
</reference>
<reference key="3">
    <citation type="journal article" date="2003" name="J. Biol. Chem.">
        <title>Syntaphilin binds to dynamin-1 and inhibits dynamin-dependent endocytosis.</title>
        <authorList>
            <person name="Das S."/>
            <person name="Gerwin C."/>
            <person name="Sheng Z.H."/>
        </authorList>
    </citation>
    <scope>INTERACTION WITH DNM1</scope>
</reference>
<reference key="4">
    <citation type="journal article" date="2012" name="Nat. Commun.">
        <title>Quantitative maps of protein phosphorylation sites across 14 different rat organs and tissues.</title>
        <authorList>
            <person name="Lundby A."/>
            <person name="Secher A."/>
            <person name="Lage K."/>
            <person name="Nordsborg N.B."/>
            <person name="Dmytriyev A."/>
            <person name="Lundby C."/>
            <person name="Olsen J.V."/>
        </authorList>
    </citation>
    <scope>PHOSPHORYLATION [LARGE SCALE ANALYSIS] AT SER-200; SER-204 AND THR-235</scope>
    <scope>IDENTIFICATION BY MASS SPECTROMETRY [LARGE SCALE ANALYSIS]</scope>
</reference>
<dbReference type="EMBL" id="CH474050">
    <property type="protein sequence ID" value="EDL86108.1"/>
    <property type="molecule type" value="Genomic_DNA"/>
</dbReference>
<dbReference type="EMBL" id="CH474050">
    <property type="protein sequence ID" value="EDL86111.1"/>
    <property type="molecule type" value="Genomic_DNA"/>
</dbReference>
<dbReference type="EMBL" id="BC168917">
    <property type="protein sequence ID" value="AAI68917.1"/>
    <property type="molecule type" value="mRNA"/>
</dbReference>
<dbReference type="RefSeq" id="NP_001099995.1">
    <property type="nucleotide sequence ID" value="NM_001106525.3"/>
</dbReference>
<dbReference type="BioGRID" id="255298">
    <property type="interactions" value="1"/>
</dbReference>
<dbReference type="FunCoup" id="B5DF41">
    <property type="interactions" value="916"/>
</dbReference>
<dbReference type="STRING" id="10116.ENSRNOP00000074165"/>
<dbReference type="iPTMnet" id="B5DF41"/>
<dbReference type="PhosphoSitePlus" id="B5DF41"/>
<dbReference type="PaxDb" id="10116-ENSRNOP00000012727"/>
<dbReference type="GeneID" id="296267"/>
<dbReference type="KEGG" id="rno:296267"/>
<dbReference type="UCSC" id="RGD:1305867">
    <property type="organism name" value="rat"/>
</dbReference>
<dbReference type="AGR" id="RGD:1305867"/>
<dbReference type="CTD" id="9751"/>
<dbReference type="RGD" id="1305867">
    <property type="gene designation" value="Snph"/>
</dbReference>
<dbReference type="VEuPathDB" id="HostDB:ENSRNOG00000009588"/>
<dbReference type="eggNOG" id="ENOG502QUYH">
    <property type="taxonomic scope" value="Eukaryota"/>
</dbReference>
<dbReference type="InParanoid" id="B5DF41"/>
<dbReference type="PhylomeDB" id="B5DF41"/>
<dbReference type="PRO" id="PR:B5DF41"/>
<dbReference type="Proteomes" id="UP000002494">
    <property type="component" value="Chromosome 3"/>
</dbReference>
<dbReference type="Proteomes" id="UP000234681">
    <property type="component" value="Chromosome 3"/>
</dbReference>
<dbReference type="Bgee" id="ENSRNOG00000009588">
    <property type="expression patterns" value="Expressed in frontal cortex and 14 other cell types or tissues"/>
</dbReference>
<dbReference type="GO" id="GO:0005737">
    <property type="term" value="C:cytoplasm"/>
    <property type="evidence" value="ECO:0000266"/>
    <property type="project" value="RGD"/>
</dbReference>
<dbReference type="GO" id="GO:0005881">
    <property type="term" value="C:cytoplasmic microtubule"/>
    <property type="evidence" value="ECO:0000250"/>
    <property type="project" value="UniProtKB"/>
</dbReference>
<dbReference type="GO" id="GO:0031966">
    <property type="term" value="C:mitochondrial membrane"/>
    <property type="evidence" value="ECO:0000314"/>
    <property type="project" value="RGD"/>
</dbReference>
<dbReference type="GO" id="GO:0005739">
    <property type="term" value="C:mitochondrion"/>
    <property type="evidence" value="ECO:0000318"/>
    <property type="project" value="GO_Central"/>
</dbReference>
<dbReference type="GO" id="GO:0043005">
    <property type="term" value="C:neuron projection"/>
    <property type="evidence" value="ECO:0007669"/>
    <property type="project" value="UniProtKB-KW"/>
</dbReference>
<dbReference type="GO" id="GO:0043025">
    <property type="term" value="C:neuronal cell body"/>
    <property type="evidence" value="ECO:0000314"/>
    <property type="project" value="RGD"/>
</dbReference>
<dbReference type="GO" id="GO:0042734">
    <property type="term" value="C:presynaptic membrane"/>
    <property type="evidence" value="ECO:0000314"/>
    <property type="project" value="RGD"/>
</dbReference>
<dbReference type="GO" id="GO:0030182">
    <property type="term" value="P:neuron differentiation"/>
    <property type="evidence" value="ECO:0000270"/>
    <property type="project" value="RGD"/>
</dbReference>
<dbReference type="InterPro" id="IPR028197">
    <property type="entry name" value="Syntaphilin/Syntabulin"/>
</dbReference>
<dbReference type="PANTHER" id="PTHR16208">
    <property type="entry name" value="MICROTUBULE-ASSOCIATED PROTEIN/SYNTAPHILIN"/>
    <property type="match status" value="1"/>
</dbReference>
<dbReference type="PANTHER" id="PTHR16208:SF1">
    <property type="entry name" value="SYNTAPHILIN"/>
    <property type="match status" value="1"/>
</dbReference>
<dbReference type="Pfam" id="PF15290">
    <property type="entry name" value="Syntaphilin"/>
    <property type="match status" value="1"/>
</dbReference>
<gene>
    <name evidence="7" type="primary">Snph</name>
</gene>
<name>SNPH_RAT</name>
<comment type="function">
    <text evidence="1">Inhibits SNARE complex formation by absorbing free STX1A.</text>
</comment>
<comment type="subunit">
    <text evidence="1 5">Binds to STX1A (By similarity). Interacts with DNM1; this interaction inhibits the binding of DNM1 to AMPH and DNM1-receptor-mediated endocytosis (PubMed:12896979).</text>
</comment>
<comment type="subcellular location">
    <subcellularLocation>
        <location evidence="6">Membrane</location>
        <topology evidence="6">Single-pass membrane protein</topology>
    </subcellularLocation>
    <subcellularLocation>
        <location>Synapse</location>
        <location>Synaptosome</location>
    </subcellularLocation>
</comment>
<keyword id="KW-0175">Coiled coil</keyword>
<keyword id="KW-0472">Membrane</keyword>
<keyword id="KW-0597">Phosphoprotein</keyword>
<keyword id="KW-1185">Reference proteome</keyword>
<keyword id="KW-0770">Synapse</keyword>
<keyword id="KW-0771">Synaptosome</keyword>
<keyword id="KW-0812">Transmembrane</keyword>
<keyword id="KW-1133">Transmembrane helix</keyword>
<protein>
    <recommendedName>
        <fullName evidence="1">Syntaphilin</fullName>
    </recommendedName>
</protein>
<organism>
    <name type="scientific">Rattus norvegicus</name>
    <name type="common">Rat</name>
    <dbReference type="NCBI Taxonomy" id="10116"/>
    <lineage>
        <taxon>Eukaryota</taxon>
        <taxon>Metazoa</taxon>
        <taxon>Chordata</taxon>
        <taxon>Craniata</taxon>
        <taxon>Vertebrata</taxon>
        <taxon>Euteleostomi</taxon>
        <taxon>Mammalia</taxon>
        <taxon>Eutheria</taxon>
        <taxon>Euarchontoglires</taxon>
        <taxon>Glires</taxon>
        <taxon>Rodentia</taxon>
        <taxon>Myomorpha</taxon>
        <taxon>Muroidea</taxon>
        <taxon>Muridae</taxon>
        <taxon>Murinae</taxon>
        <taxon>Rattus</taxon>
    </lineage>
</organism>